<gene>
    <name evidence="1" type="primary">plsX</name>
    <name type="ordered locus">ECED1_1233</name>
</gene>
<protein>
    <recommendedName>
        <fullName evidence="1">Phosphate acyltransferase</fullName>
        <ecNumber evidence="1">2.3.1.274</ecNumber>
    </recommendedName>
    <alternativeName>
        <fullName evidence="1">Acyl-ACP phosphotransacylase</fullName>
    </alternativeName>
    <alternativeName>
        <fullName evidence="1">Acyl-[acyl-carrier-protein]--phosphate acyltransferase</fullName>
    </alternativeName>
    <alternativeName>
        <fullName evidence="1">Phosphate-acyl-ACP acyltransferase</fullName>
    </alternativeName>
</protein>
<comment type="function">
    <text evidence="1">Catalyzes the reversible formation of acyl-phosphate (acyl-PO(4)) from acyl-[acyl-carrier-protein] (acyl-ACP). This enzyme utilizes acyl-ACP as fatty acyl donor, but not acyl-CoA.</text>
</comment>
<comment type="catalytic activity">
    <reaction evidence="1">
        <text>a fatty acyl-[ACP] + phosphate = an acyl phosphate + holo-[ACP]</text>
        <dbReference type="Rhea" id="RHEA:42292"/>
        <dbReference type="Rhea" id="RHEA-COMP:9685"/>
        <dbReference type="Rhea" id="RHEA-COMP:14125"/>
        <dbReference type="ChEBI" id="CHEBI:43474"/>
        <dbReference type="ChEBI" id="CHEBI:59918"/>
        <dbReference type="ChEBI" id="CHEBI:64479"/>
        <dbReference type="ChEBI" id="CHEBI:138651"/>
        <dbReference type="EC" id="2.3.1.274"/>
    </reaction>
</comment>
<comment type="pathway">
    <text evidence="1">Lipid metabolism; phospholipid metabolism.</text>
</comment>
<comment type="subunit">
    <text evidence="1">Homodimer. Probably interacts with PlsY.</text>
</comment>
<comment type="subcellular location">
    <subcellularLocation>
        <location evidence="1">Cytoplasm</location>
    </subcellularLocation>
    <text evidence="1">Associated with the membrane possibly through PlsY.</text>
</comment>
<comment type="similarity">
    <text evidence="1">Belongs to the PlsX family.</text>
</comment>
<evidence type="ECO:0000255" key="1">
    <source>
        <dbReference type="HAMAP-Rule" id="MF_00019"/>
    </source>
</evidence>
<dbReference type="EC" id="2.3.1.274" evidence="1"/>
<dbReference type="EMBL" id="CU928162">
    <property type="protein sequence ID" value="CAR07434.1"/>
    <property type="molecule type" value="Genomic_DNA"/>
</dbReference>
<dbReference type="RefSeq" id="WP_000197578.1">
    <property type="nucleotide sequence ID" value="NC_011745.1"/>
</dbReference>
<dbReference type="SMR" id="B7MTM0"/>
<dbReference type="GeneID" id="93776318"/>
<dbReference type="KEGG" id="ecq:ECED1_1233"/>
<dbReference type="HOGENOM" id="CLU_039379_1_0_6"/>
<dbReference type="UniPathway" id="UPA00085"/>
<dbReference type="Proteomes" id="UP000000748">
    <property type="component" value="Chromosome"/>
</dbReference>
<dbReference type="GO" id="GO:0005737">
    <property type="term" value="C:cytoplasm"/>
    <property type="evidence" value="ECO:0007669"/>
    <property type="project" value="UniProtKB-SubCell"/>
</dbReference>
<dbReference type="GO" id="GO:0043811">
    <property type="term" value="F:phosphate:acyl-[acyl carrier protein] acyltransferase activity"/>
    <property type="evidence" value="ECO:0007669"/>
    <property type="project" value="UniProtKB-UniRule"/>
</dbReference>
<dbReference type="GO" id="GO:0006633">
    <property type="term" value="P:fatty acid biosynthetic process"/>
    <property type="evidence" value="ECO:0007669"/>
    <property type="project" value="UniProtKB-UniRule"/>
</dbReference>
<dbReference type="GO" id="GO:0008654">
    <property type="term" value="P:phospholipid biosynthetic process"/>
    <property type="evidence" value="ECO:0007669"/>
    <property type="project" value="UniProtKB-KW"/>
</dbReference>
<dbReference type="FunFam" id="3.40.718.10:FF:000008">
    <property type="entry name" value="Phosphate acyltransferase"/>
    <property type="match status" value="1"/>
</dbReference>
<dbReference type="Gene3D" id="3.40.718.10">
    <property type="entry name" value="Isopropylmalate Dehydrogenase"/>
    <property type="match status" value="1"/>
</dbReference>
<dbReference type="HAMAP" id="MF_00019">
    <property type="entry name" value="PlsX"/>
    <property type="match status" value="1"/>
</dbReference>
<dbReference type="InterPro" id="IPR003664">
    <property type="entry name" value="FA_synthesis"/>
</dbReference>
<dbReference type="InterPro" id="IPR012281">
    <property type="entry name" value="Phospholipid_synth_PlsX-like"/>
</dbReference>
<dbReference type="NCBIfam" id="TIGR00182">
    <property type="entry name" value="plsX"/>
    <property type="match status" value="1"/>
</dbReference>
<dbReference type="PANTHER" id="PTHR30100">
    <property type="entry name" value="FATTY ACID/PHOSPHOLIPID SYNTHESIS PROTEIN PLSX"/>
    <property type="match status" value="1"/>
</dbReference>
<dbReference type="PANTHER" id="PTHR30100:SF1">
    <property type="entry name" value="PHOSPHATE ACYLTRANSFERASE"/>
    <property type="match status" value="1"/>
</dbReference>
<dbReference type="Pfam" id="PF02504">
    <property type="entry name" value="FA_synthesis"/>
    <property type="match status" value="1"/>
</dbReference>
<dbReference type="PIRSF" id="PIRSF002465">
    <property type="entry name" value="Phsphlp_syn_PlsX"/>
    <property type="match status" value="1"/>
</dbReference>
<dbReference type="SUPFAM" id="SSF53659">
    <property type="entry name" value="Isocitrate/Isopropylmalate dehydrogenase-like"/>
    <property type="match status" value="1"/>
</dbReference>
<name>PLSX_ECO81</name>
<reference key="1">
    <citation type="journal article" date="2009" name="PLoS Genet.">
        <title>Organised genome dynamics in the Escherichia coli species results in highly diverse adaptive paths.</title>
        <authorList>
            <person name="Touchon M."/>
            <person name="Hoede C."/>
            <person name="Tenaillon O."/>
            <person name="Barbe V."/>
            <person name="Baeriswyl S."/>
            <person name="Bidet P."/>
            <person name="Bingen E."/>
            <person name="Bonacorsi S."/>
            <person name="Bouchier C."/>
            <person name="Bouvet O."/>
            <person name="Calteau A."/>
            <person name="Chiapello H."/>
            <person name="Clermont O."/>
            <person name="Cruveiller S."/>
            <person name="Danchin A."/>
            <person name="Diard M."/>
            <person name="Dossat C."/>
            <person name="Karoui M.E."/>
            <person name="Frapy E."/>
            <person name="Garry L."/>
            <person name="Ghigo J.M."/>
            <person name="Gilles A.M."/>
            <person name="Johnson J."/>
            <person name="Le Bouguenec C."/>
            <person name="Lescat M."/>
            <person name="Mangenot S."/>
            <person name="Martinez-Jehanne V."/>
            <person name="Matic I."/>
            <person name="Nassif X."/>
            <person name="Oztas S."/>
            <person name="Petit M.A."/>
            <person name="Pichon C."/>
            <person name="Rouy Z."/>
            <person name="Ruf C.S."/>
            <person name="Schneider D."/>
            <person name="Tourret J."/>
            <person name="Vacherie B."/>
            <person name="Vallenet D."/>
            <person name="Medigue C."/>
            <person name="Rocha E.P.C."/>
            <person name="Denamur E."/>
        </authorList>
    </citation>
    <scope>NUCLEOTIDE SEQUENCE [LARGE SCALE GENOMIC DNA]</scope>
    <source>
        <strain>ED1a</strain>
    </source>
</reference>
<organism>
    <name type="scientific">Escherichia coli O81 (strain ED1a)</name>
    <dbReference type="NCBI Taxonomy" id="585397"/>
    <lineage>
        <taxon>Bacteria</taxon>
        <taxon>Pseudomonadati</taxon>
        <taxon>Pseudomonadota</taxon>
        <taxon>Gammaproteobacteria</taxon>
        <taxon>Enterobacterales</taxon>
        <taxon>Enterobacteriaceae</taxon>
        <taxon>Escherichia</taxon>
    </lineage>
</organism>
<sequence>MTRLTLALDVMGGDFGPSVTVPAALQALNSNSQLTLLLVGNPDAITPLLAKADFEQRSRLQIIPAQSVIASDARPSQAIRASRGSSMRVALELVKEGRAQACVSAGNTGALMGLAKLLLKPLEGIERPALVTVLPHQQKGKTVVLDLGANVDCDSTMLVQFAIMGSVLAEEVVEIPNPRVALLNIGEEEVKGLDSIRDASAVLKTIPSINYIGYLEANELLTGKTDVLVCDGFTGNVTLKTMEGVVRMFLSLLKSQGEGKKRSWWLLLLKRWLQKSLTRRFSHLNPDQYNGACLLGLRGTVIKSHGAANQRAFAVAIEQAVQAVQRQVPQRIAARLESVYPAGFELLDGGKSGTLR</sequence>
<feature type="chain" id="PRO_1000193135" description="Phosphate acyltransferase">
    <location>
        <begin position="1"/>
        <end position="356"/>
    </location>
</feature>
<keyword id="KW-0963">Cytoplasm</keyword>
<keyword id="KW-0444">Lipid biosynthesis</keyword>
<keyword id="KW-0443">Lipid metabolism</keyword>
<keyword id="KW-0594">Phospholipid biosynthesis</keyword>
<keyword id="KW-1208">Phospholipid metabolism</keyword>
<keyword id="KW-0808">Transferase</keyword>
<proteinExistence type="inferred from homology"/>
<accession>B7MTM0</accession>